<keyword id="KW-1185">Reference proteome</keyword>
<feature type="chain" id="PRO_0000217845" description="Uncharacterized PPE family protein PPE19">
    <location>
        <begin position="1"/>
        <end position="396"/>
    </location>
</feature>
<gene>
    <name type="primary">PPE19</name>
    <name type="ordered locus">Rv1361c</name>
    <name type="ORF">MTCY02B10.25c</name>
</gene>
<organism>
    <name type="scientific">Mycobacterium tuberculosis (strain ATCC 25618 / H37Rv)</name>
    <dbReference type="NCBI Taxonomy" id="83332"/>
    <lineage>
        <taxon>Bacteria</taxon>
        <taxon>Bacillati</taxon>
        <taxon>Actinomycetota</taxon>
        <taxon>Actinomycetes</taxon>
        <taxon>Mycobacteriales</taxon>
        <taxon>Mycobacteriaceae</taxon>
        <taxon>Mycobacterium</taxon>
        <taxon>Mycobacterium tuberculosis complex</taxon>
    </lineage>
</organism>
<comment type="similarity">
    <text evidence="1">Belongs to the mycobacterial PPE family.</text>
</comment>
<evidence type="ECO:0000305" key="1"/>
<accession>P9WI25</accession>
<accession>L0T961</accession>
<accession>Q11031</accession>
<protein>
    <recommendedName>
        <fullName>Uncharacterized PPE family protein PPE19</fullName>
    </recommendedName>
</protein>
<reference key="1">
    <citation type="journal article" date="1998" name="Nature">
        <title>Deciphering the biology of Mycobacterium tuberculosis from the complete genome sequence.</title>
        <authorList>
            <person name="Cole S.T."/>
            <person name="Brosch R."/>
            <person name="Parkhill J."/>
            <person name="Garnier T."/>
            <person name="Churcher C.M."/>
            <person name="Harris D.E."/>
            <person name="Gordon S.V."/>
            <person name="Eiglmeier K."/>
            <person name="Gas S."/>
            <person name="Barry C.E. III"/>
            <person name="Tekaia F."/>
            <person name="Badcock K."/>
            <person name="Basham D."/>
            <person name="Brown D."/>
            <person name="Chillingworth T."/>
            <person name="Connor R."/>
            <person name="Davies R.M."/>
            <person name="Devlin K."/>
            <person name="Feltwell T."/>
            <person name="Gentles S."/>
            <person name="Hamlin N."/>
            <person name="Holroyd S."/>
            <person name="Hornsby T."/>
            <person name="Jagels K."/>
            <person name="Krogh A."/>
            <person name="McLean J."/>
            <person name="Moule S."/>
            <person name="Murphy L.D."/>
            <person name="Oliver S."/>
            <person name="Osborne J."/>
            <person name="Quail M.A."/>
            <person name="Rajandream M.A."/>
            <person name="Rogers J."/>
            <person name="Rutter S."/>
            <person name="Seeger K."/>
            <person name="Skelton S."/>
            <person name="Squares S."/>
            <person name="Squares R."/>
            <person name="Sulston J.E."/>
            <person name="Taylor K."/>
            <person name="Whitehead S."/>
            <person name="Barrell B.G."/>
        </authorList>
    </citation>
    <scope>NUCLEOTIDE SEQUENCE [LARGE SCALE GENOMIC DNA]</scope>
    <source>
        <strain>ATCC 25618 / H37Rv</strain>
    </source>
</reference>
<sequence>MVDFGALPPEINSARMYAGPGSASLVAAAKMWDSVASDLFSAASAFQSVVWGLTTGSWIGSSAGLMVAAASPYVAWMSVTAGQAELTAAQVRVAAAAYETAYGLTVPPPVIAENRAELMILIATNLLGQNTPAIAVNEAEYGEMWAQDAAAMFGYAATAATATEALLPFEDAPLITNPGGLLEQAVAVEEAIDTAAANQLMNNVPQALQQLAQPTKSIWPFDQLSELWKAISPHLSPLSNIVSMLNNHVSMTNSGVSMASTLHSMLKGFAPAAAQAVETAAQNGVQAMSSLGSQLGSSLGSSGLGAGVAANLGRAASVGSLSVPQAWAAANQAVTPAARALPLTSLTSAAQTAPGHMLGGLPLGQLTNSGGGFGGVSNALRMPPRAYVMPRVPAAG</sequence>
<dbReference type="EMBL" id="AL123456">
    <property type="protein sequence ID" value="CCP44119.1"/>
    <property type="molecule type" value="Genomic_DNA"/>
</dbReference>
<dbReference type="PIR" id="H70741">
    <property type="entry name" value="H70741"/>
</dbReference>
<dbReference type="RefSeq" id="WP_003901140.1">
    <property type="nucleotide sequence ID" value="NZ_NVQJ01000031.1"/>
</dbReference>
<dbReference type="RefSeq" id="YP_177801.1">
    <property type="nucleotide sequence ID" value="NC_000962.3"/>
</dbReference>
<dbReference type="SMR" id="P9WI25"/>
<dbReference type="STRING" id="83332.Rv1361c"/>
<dbReference type="PaxDb" id="83332-Rv1361c"/>
<dbReference type="GeneID" id="886819"/>
<dbReference type="KEGG" id="mtu:Rv1361c"/>
<dbReference type="KEGG" id="mtv:RVBD_1361c"/>
<dbReference type="TubercuList" id="Rv1361c"/>
<dbReference type="eggNOG" id="COG5651">
    <property type="taxonomic scope" value="Bacteria"/>
</dbReference>
<dbReference type="InParanoid" id="P9WI25"/>
<dbReference type="OrthoDB" id="4710842at2"/>
<dbReference type="PhylomeDB" id="P9WI25"/>
<dbReference type="Proteomes" id="UP000001584">
    <property type="component" value="Chromosome"/>
</dbReference>
<dbReference type="GO" id="GO:0009274">
    <property type="term" value="C:peptidoglycan-based cell wall"/>
    <property type="evidence" value="ECO:0007005"/>
    <property type="project" value="MTBBASE"/>
</dbReference>
<dbReference type="GO" id="GO:0052572">
    <property type="term" value="P:response to host immune response"/>
    <property type="evidence" value="ECO:0000318"/>
    <property type="project" value="GO_Central"/>
</dbReference>
<dbReference type="FunFam" id="1.20.1260.20:FF:000001">
    <property type="entry name" value="PPE family protein PPE41"/>
    <property type="match status" value="1"/>
</dbReference>
<dbReference type="Gene3D" id="1.20.1260.20">
    <property type="entry name" value="PPE superfamily"/>
    <property type="match status" value="1"/>
</dbReference>
<dbReference type="InterPro" id="IPR022171">
    <property type="entry name" value="PPE_C"/>
</dbReference>
<dbReference type="InterPro" id="IPR000030">
    <property type="entry name" value="PPE_dom"/>
</dbReference>
<dbReference type="InterPro" id="IPR038332">
    <property type="entry name" value="PPE_sf"/>
</dbReference>
<dbReference type="PANTHER" id="PTHR46766">
    <property type="entry name" value="GLUTAMINE-RICH PROTEIN 2"/>
    <property type="match status" value="1"/>
</dbReference>
<dbReference type="PANTHER" id="PTHR46766:SF1">
    <property type="entry name" value="GLUTAMINE-RICH PROTEIN 2"/>
    <property type="match status" value="1"/>
</dbReference>
<dbReference type="Pfam" id="PF00823">
    <property type="entry name" value="PPE"/>
    <property type="match status" value="1"/>
</dbReference>
<dbReference type="Pfam" id="PF12484">
    <property type="entry name" value="PPE-SVP"/>
    <property type="match status" value="1"/>
</dbReference>
<dbReference type="SUPFAM" id="SSF140459">
    <property type="entry name" value="PE/PPE dimer-like"/>
    <property type="match status" value="1"/>
</dbReference>
<name>PPE19_MYCTU</name>
<proteinExistence type="inferred from homology"/>